<name>MTND_PICP2</name>
<gene>
    <name evidence="1" type="primary">mtnD</name>
    <name type="ordered locus">SYNPCC7002_A0553</name>
</gene>
<feature type="chain" id="PRO_0000359238" description="Acireductone dioxygenase">
    <location>
        <begin position="1"/>
        <end position="176"/>
    </location>
</feature>
<feature type="binding site" evidence="1">
    <location>
        <position position="91"/>
    </location>
    <ligand>
        <name>Fe(2+)</name>
        <dbReference type="ChEBI" id="CHEBI:29033"/>
    </ligand>
</feature>
<feature type="binding site" evidence="1">
    <location>
        <position position="91"/>
    </location>
    <ligand>
        <name>Ni(2+)</name>
        <dbReference type="ChEBI" id="CHEBI:49786"/>
    </ligand>
</feature>
<feature type="binding site" evidence="1">
    <location>
        <position position="93"/>
    </location>
    <ligand>
        <name>Fe(2+)</name>
        <dbReference type="ChEBI" id="CHEBI:29033"/>
    </ligand>
</feature>
<feature type="binding site" evidence="1">
    <location>
        <position position="93"/>
    </location>
    <ligand>
        <name>Ni(2+)</name>
        <dbReference type="ChEBI" id="CHEBI:49786"/>
    </ligand>
</feature>
<feature type="binding site" evidence="1">
    <location>
        <position position="97"/>
    </location>
    <ligand>
        <name>Fe(2+)</name>
        <dbReference type="ChEBI" id="CHEBI:29033"/>
    </ligand>
</feature>
<feature type="binding site" evidence="1">
    <location>
        <position position="97"/>
    </location>
    <ligand>
        <name>Ni(2+)</name>
        <dbReference type="ChEBI" id="CHEBI:49786"/>
    </ligand>
</feature>
<feature type="binding site" evidence="1">
    <location>
        <position position="136"/>
    </location>
    <ligand>
        <name>Fe(2+)</name>
        <dbReference type="ChEBI" id="CHEBI:29033"/>
    </ligand>
</feature>
<feature type="binding site" evidence="1">
    <location>
        <position position="136"/>
    </location>
    <ligand>
        <name>Ni(2+)</name>
        <dbReference type="ChEBI" id="CHEBI:49786"/>
    </ligand>
</feature>
<feature type="site" description="May play a role in metal incorporation in vivo" evidence="1">
    <location>
        <position position="90"/>
    </location>
</feature>
<feature type="site" description="May play a role in transmitting local conformational changes" evidence="1">
    <location>
        <position position="96"/>
    </location>
</feature>
<feature type="site" description="Important to generate the dianion" evidence="1">
    <location>
        <position position="99"/>
    </location>
</feature>
<keyword id="KW-0028">Amino-acid biosynthesis</keyword>
<keyword id="KW-0223">Dioxygenase</keyword>
<keyword id="KW-0408">Iron</keyword>
<keyword id="KW-0479">Metal-binding</keyword>
<keyword id="KW-0486">Methionine biosynthesis</keyword>
<keyword id="KW-0533">Nickel</keyword>
<keyword id="KW-0560">Oxidoreductase</keyword>
<keyword id="KW-1185">Reference proteome</keyword>
<accession>B1XPT2</accession>
<reference key="1">
    <citation type="submission" date="2008-02" db="EMBL/GenBank/DDBJ databases">
        <title>Complete sequence of Synechococcus sp. PCC 7002.</title>
        <authorList>
            <person name="Li T."/>
            <person name="Zhao J."/>
            <person name="Zhao C."/>
            <person name="Liu Z."/>
            <person name="Zhao F."/>
            <person name="Marquardt J."/>
            <person name="Nomura C.T."/>
            <person name="Persson S."/>
            <person name="Detter J.C."/>
            <person name="Richardson P.M."/>
            <person name="Lanz C."/>
            <person name="Schuster S.C."/>
            <person name="Wang J."/>
            <person name="Li S."/>
            <person name="Huang X."/>
            <person name="Cai T."/>
            <person name="Yu Z."/>
            <person name="Luo J."/>
            <person name="Zhao J."/>
            <person name="Bryant D.A."/>
        </authorList>
    </citation>
    <scope>NUCLEOTIDE SEQUENCE [LARGE SCALE GENOMIC DNA]</scope>
    <source>
        <strain>ATCC 27264 / PCC 7002 / PR-6</strain>
    </source>
</reference>
<sequence>MTTLYQTESKQTLTDPATIKDFLKSHGIWFEQWETPAQLTQEASQADILAAYADVLDPFMAANGYQSADVVNIHSGIENYQAIREKFLAEHTHSEDEVRFFVAGQGLFWFNLDGTAVFNVCCEAGDLISVPQGTKHWFDAGPVPNVKAIRIFSDTAGWTPHYTGSQVEQQYRAITL</sequence>
<comment type="function">
    <text evidence="1">Catalyzes 2 different reactions between oxygen and the acireductone 1,2-dihydroxy-3-keto-5-methylthiopentene (DHK-MTPene) depending upon the metal bound in the active site. Fe-containing acireductone dioxygenase (Fe-ARD) produces formate and 2-keto-4-methylthiobutyrate (KMTB), the alpha-ketoacid precursor of methionine in the methionine recycle pathway. Ni-containing acireductone dioxygenase (Ni-ARD) produces methylthiopropionate, carbon monoxide and formate, and does not lie on the methionine recycle pathway.</text>
</comment>
<comment type="catalytic activity">
    <reaction evidence="1">
        <text>1,2-dihydroxy-5-(methylsulfanyl)pent-1-en-3-one + O2 = 3-(methylsulfanyl)propanoate + CO + formate + 2 H(+)</text>
        <dbReference type="Rhea" id="RHEA:14161"/>
        <dbReference type="ChEBI" id="CHEBI:15378"/>
        <dbReference type="ChEBI" id="CHEBI:15379"/>
        <dbReference type="ChEBI" id="CHEBI:15740"/>
        <dbReference type="ChEBI" id="CHEBI:17245"/>
        <dbReference type="ChEBI" id="CHEBI:49016"/>
        <dbReference type="ChEBI" id="CHEBI:49252"/>
        <dbReference type="EC" id="1.13.11.53"/>
    </reaction>
</comment>
<comment type="catalytic activity">
    <reaction evidence="1">
        <text>1,2-dihydroxy-5-(methylsulfanyl)pent-1-en-3-one + O2 = 4-methylsulfanyl-2-oxobutanoate + formate + 2 H(+)</text>
        <dbReference type="Rhea" id="RHEA:24504"/>
        <dbReference type="ChEBI" id="CHEBI:15378"/>
        <dbReference type="ChEBI" id="CHEBI:15379"/>
        <dbReference type="ChEBI" id="CHEBI:15740"/>
        <dbReference type="ChEBI" id="CHEBI:16723"/>
        <dbReference type="ChEBI" id="CHEBI:49252"/>
        <dbReference type="EC" id="1.13.11.54"/>
    </reaction>
</comment>
<comment type="cofactor">
    <cofactor evidence="1">
        <name>Fe(2+)</name>
        <dbReference type="ChEBI" id="CHEBI:29033"/>
    </cofactor>
    <text evidence="1">Binds 1 Fe(2+) cation per monomer.</text>
</comment>
<comment type="cofactor">
    <cofactor evidence="1">
        <name>Ni(2+)</name>
        <dbReference type="ChEBI" id="CHEBI:49786"/>
    </cofactor>
    <text evidence="1">Binds 1 nickel ion per monomer.</text>
</comment>
<comment type="pathway">
    <text evidence="1">Amino-acid biosynthesis; L-methionine biosynthesis via salvage pathway; L-methionine from S-methyl-5-thio-alpha-D-ribose 1-phosphate: step 5/6.</text>
</comment>
<comment type="subunit">
    <text evidence="1">Monomer.</text>
</comment>
<comment type="similarity">
    <text evidence="1">Belongs to the acireductone dioxygenase (ARD) family.</text>
</comment>
<organism>
    <name type="scientific">Picosynechococcus sp. (strain ATCC 27264 / PCC 7002 / PR-6)</name>
    <name type="common">Agmenellum quadruplicatum</name>
    <dbReference type="NCBI Taxonomy" id="32049"/>
    <lineage>
        <taxon>Bacteria</taxon>
        <taxon>Bacillati</taxon>
        <taxon>Cyanobacteriota</taxon>
        <taxon>Cyanophyceae</taxon>
        <taxon>Oscillatoriophycideae</taxon>
        <taxon>Chroococcales</taxon>
        <taxon>Geminocystaceae</taxon>
        <taxon>Picosynechococcus</taxon>
    </lineage>
</organism>
<proteinExistence type="inferred from homology"/>
<evidence type="ECO:0000255" key="1">
    <source>
        <dbReference type="HAMAP-Rule" id="MF_01682"/>
    </source>
</evidence>
<protein>
    <recommendedName>
        <fullName evidence="1">Acireductone dioxygenase</fullName>
    </recommendedName>
    <alternativeName>
        <fullName evidence="1">1,2-dihydroxy-3-keto-5-methylthiopentene dioxygenase</fullName>
        <shortName evidence="1">DHK-MTPene dioxygenase</shortName>
    </alternativeName>
    <alternativeName>
        <fullName evidence="1">Acireductone dioxygenase (Fe(2+)-requiring)</fullName>
        <shortName evidence="1">ARD'</shortName>
        <shortName evidence="1">Fe-ARD</shortName>
        <ecNumber evidence="1">1.13.11.54</ecNumber>
    </alternativeName>
    <alternativeName>
        <fullName evidence="1">Acireductone dioxygenase (Ni(2+)-requiring)</fullName>
        <shortName evidence="1">ARD</shortName>
        <shortName evidence="1">Ni-ARD</shortName>
        <ecNumber evidence="1">1.13.11.53</ecNumber>
    </alternativeName>
</protein>
<dbReference type="EC" id="1.13.11.54" evidence="1"/>
<dbReference type="EC" id="1.13.11.53" evidence="1"/>
<dbReference type="EMBL" id="CP000951">
    <property type="protein sequence ID" value="ACA98560.1"/>
    <property type="molecule type" value="Genomic_DNA"/>
</dbReference>
<dbReference type="RefSeq" id="WP_012306184.1">
    <property type="nucleotide sequence ID" value="NZ_JAHHPU010000001.1"/>
</dbReference>
<dbReference type="SMR" id="B1XPT2"/>
<dbReference type="STRING" id="32049.SYNPCC7002_A0553"/>
<dbReference type="KEGG" id="syp:SYNPCC7002_A0553"/>
<dbReference type="eggNOG" id="COG1791">
    <property type="taxonomic scope" value="Bacteria"/>
</dbReference>
<dbReference type="HOGENOM" id="CLU_125400_0_0_3"/>
<dbReference type="UniPathway" id="UPA00904">
    <property type="reaction ID" value="UER00878"/>
</dbReference>
<dbReference type="Proteomes" id="UP000001688">
    <property type="component" value="Chromosome"/>
</dbReference>
<dbReference type="GO" id="GO:0010308">
    <property type="term" value="F:acireductone dioxygenase (Ni2+-requiring) activity"/>
    <property type="evidence" value="ECO:0007669"/>
    <property type="project" value="UniProtKB-UniRule"/>
</dbReference>
<dbReference type="GO" id="GO:0010309">
    <property type="term" value="F:acireductone dioxygenase [iron(II)-requiring] activity"/>
    <property type="evidence" value="ECO:0007669"/>
    <property type="project" value="UniProtKB-UniRule"/>
</dbReference>
<dbReference type="GO" id="GO:0005506">
    <property type="term" value="F:iron ion binding"/>
    <property type="evidence" value="ECO:0007669"/>
    <property type="project" value="UniProtKB-UniRule"/>
</dbReference>
<dbReference type="GO" id="GO:0016151">
    <property type="term" value="F:nickel cation binding"/>
    <property type="evidence" value="ECO:0007669"/>
    <property type="project" value="UniProtKB-UniRule"/>
</dbReference>
<dbReference type="GO" id="GO:0019509">
    <property type="term" value="P:L-methionine salvage from methylthioadenosine"/>
    <property type="evidence" value="ECO:0007669"/>
    <property type="project" value="UniProtKB-UniRule"/>
</dbReference>
<dbReference type="GO" id="GO:0019284">
    <property type="term" value="P:L-methionine salvage from S-adenosylmethionine"/>
    <property type="evidence" value="ECO:0007669"/>
    <property type="project" value="InterPro"/>
</dbReference>
<dbReference type="CDD" id="cd02232">
    <property type="entry name" value="cupin_ARD"/>
    <property type="match status" value="1"/>
</dbReference>
<dbReference type="Gene3D" id="2.60.120.10">
    <property type="entry name" value="Jelly Rolls"/>
    <property type="match status" value="1"/>
</dbReference>
<dbReference type="HAMAP" id="MF_01682">
    <property type="entry name" value="Salvage_MtnD"/>
    <property type="match status" value="1"/>
</dbReference>
<dbReference type="InterPro" id="IPR004313">
    <property type="entry name" value="ARD"/>
</dbReference>
<dbReference type="InterPro" id="IPR023956">
    <property type="entry name" value="ARD_bac"/>
</dbReference>
<dbReference type="InterPro" id="IPR014710">
    <property type="entry name" value="RmlC-like_jellyroll"/>
</dbReference>
<dbReference type="InterPro" id="IPR011051">
    <property type="entry name" value="RmlC_Cupin_sf"/>
</dbReference>
<dbReference type="PANTHER" id="PTHR23418">
    <property type="entry name" value="ACIREDUCTONE DIOXYGENASE"/>
    <property type="match status" value="1"/>
</dbReference>
<dbReference type="PANTHER" id="PTHR23418:SF0">
    <property type="entry name" value="ACIREDUCTONE DIOXYGENASE"/>
    <property type="match status" value="1"/>
</dbReference>
<dbReference type="Pfam" id="PF03079">
    <property type="entry name" value="ARD"/>
    <property type="match status" value="1"/>
</dbReference>
<dbReference type="SUPFAM" id="SSF51182">
    <property type="entry name" value="RmlC-like cupins"/>
    <property type="match status" value="1"/>
</dbReference>